<feature type="chain" id="PRO_1000074481" description="Crossover junction endodeoxyribonuclease RuvC">
    <location>
        <begin position="1"/>
        <end position="204"/>
    </location>
</feature>
<feature type="active site" evidence="1">
    <location>
        <position position="7"/>
    </location>
</feature>
<feature type="active site" evidence="1">
    <location>
        <position position="68"/>
    </location>
</feature>
<feature type="active site" evidence="1">
    <location>
        <position position="141"/>
    </location>
</feature>
<feature type="binding site" evidence="1">
    <location>
        <position position="7"/>
    </location>
    <ligand>
        <name>Mg(2+)</name>
        <dbReference type="ChEBI" id="CHEBI:18420"/>
        <label>1</label>
    </ligand>
</feature>
<feature type="binding site" evidence="1">
    <location>
        <position position="68"/>
    </location>
    <ligand>
        <name>Mg(2+)</name>
        <dbReference type="ChEBI" id="CHEBI:18420"/>
        <label>2</label>
    </ligand>
</feature>
<feature type="binding site" evidence="1">
    <location>
        <position position="141"/>
    </location>
    <ligand>
        <name>Mg(2+)</name>
        <dbReference type="ChEBI" id="CHEBI:18420"/>
        <label>1</label>
    </ligand>
</feature>
<name>RUVC_CLASE</name>
<reference key="1">
    <citation type="journal article" date="2008" name="J. Bacteriol.">
        <title>Genome of the actinomycete plant pathogen Clavibacter michiganensis subsp. sepedonicus suggests recent niche adaptation.</title>
        <authorList>
            <person name="Bentley S.D."/>
            <person name="Corton C."/>
            <person name="Brown S.E."/>
            <person name="Barron A."/>
            <person name="Clark L."/>
            <person name="Doggett J."/>
            <person name="Harris B."/>
            <person name="Ormond D."/>
            <person name="Quail M.A."/>
            <person name="May G."/>
            <person name="Francis D."/>
            <person name="Knudson D."/>
            <person name="Parkhill J."/>
            <person name="Ishimaru C.A."/>
        </authorList>
    </citation>
    <scope>NUCLEOTIDE SEQUENCE [LARGE SCALE GENOMIC DNA]</scope>
    <source>
        <strain>ATCC 33113 / DSM 20744 / JCM 9667 / LMG 2889 / ICMP 2535 / C-1</strain>
    </source>
</reference>
<protein>
    <recommendedName>
        <fullName evidence="1">Crossover junction endodeoxyribonuclease RuvC</fullName>
        <ecNumber evidence="1">3.1.21.10</ecNumber>
    </recommendedName>
    <alternativeName>
        <fullName evidence="1">Holliday junction nuclease RuvC</fullName>
    </alternativeName>
    <alternativeName>
        <fullName evidence="1">Holliday junction resolvase RuvC</fullName>
    </alternativeName>
</protein>
<comment type="function">
    <text evidence="1">The RuvA-RuvB-RuvC complex processes Holliday junction (HJ) DNA during genetic recombination and DNA repair. Endonuclease that resolves HJ intermediates. Cleaves cruciform DNA by making single-stranded nicks across the HJ at symmetrical positions within the homologous arms, yielding a 5'-phosphate and a 3'-hydroxyl group; requires a central core of homology in the junction. The consensus cleavage sequence is 5'-(A/T)TT(C/G)-3'. Cleavage occurs on the 3'-side of the TT dinucleotide at the point of strand exchange. HJ branch migration catalyzed by RuvA-RuvB allows RuvC to scan DNA until it finds its consensus sequence, where it cleaves and resolves the cruciform DNA.</text>
</comment>
<comment type="catalytic activity">
    <reaction evidence="1">
        <text>Endonucleolytic cleavage at a junction such as a reciprocal single-stranded crossover between two homologous DNA duplexes (Holliday junction).</text>
        <dbReference type="EC" id="3.1.21.10"/>
    </reaction>
</comment>
<comment type="cofactor">
    <cofactor evidence="1">
        <name>Mg(2+)</name>
        <dbReference type="ChEBI" id="CHEBI:18420"/>
    </cofactor>
    <text evidence="1">Binds 2 Mg(2+) ion per subunit.</text>
</comment>
<comment type="subunit">
    <text evidence="1">Homodimer which binds Holliday junction (HJ) DNA. The HJ becomes 2-fold symmetrical on binding to RuvC with unstacked arms; it has a different conformation from HJ DNA in complex with RuvA. In the full resolvosome a probable DNA-RuvA(4)-RuvB(12)-RuvC(2) complex forms which resolves the HJ.</text>
</comment>
<comment type="subcellular location">
    <subcellularLocation>
        <location evidence="1">Cytoplasm</location>
    </subcellularLocation>
</comment>
<comment type="similarity">
    <text evidence="1">Belongs to the RuvC family.</text>
</comment>
<gene>
    <name evidence="1" type="primary">ruvC</name>
    <name type="ordered locus">CMS0716</name>
</gene>
<accession>B0REB8</accession>
<keyword id="KW-0963">Cytoplasm</keyword>
<keyword id="KW-0227">DNA damage</keyword>
<keyword id="KW-0233">DNA recombination</keyword>
<keyword id="KW-0234">DNA repair</keyword>
<keyword id="KW-0238">DNA-binding</keyword>
<keyword id="KW-0255">Endonuclease</keyword>
<keyword id="KW-0378">Hydrolase</keyword>
<keyword id="KW-0460">Magnesium</keyword>
<keyword id="KW-0479">Metal-binding</keyword>
<keyword id="KW-0540">Nuclease</keyword>
<sequence length="204" mass="20987">MRILGIDPGLTRCGVGVVDVYADRSARLVDVQVVRTSPTAELHHRLLAVGDGIEELVDRHRPSVVAVERVFAQDNLSTVMGVAQITGVALVGAARRGLDVALHTPSEVKAAVTGYGQADKRQVATMVARILGLDELPTPADASDALALAICAGWRAGMSRAGIAGTQAPTRTGVASAADAAAGAGPTAAQAAWLAAERAQRGRR</sequence>
<proteinExistence type="inferred from homology"/>
<organism>
    <name type="scientific">Clavibacter sepedonicus</name>
    <name type="common">Clavibacter michiganensis subsp. sepedonicus</name>
    <dbReference type="NCBI Taxonomy" id="31964"/>
    <lineage>
        <taxon>Bacteria</taxon>
        <taxon>Bacillati</taxon>
        <taxon>Actinomycetota</taxon>
        <taxon>Actinomycetes</taxon>
        <taxon>Micrococcales</taxon>
        <taxon>Microbacteriaceae</taxon>
        <taxon>Clavibacter</taxon>
    </lineage>
</organism>
<dbReference type="EC" id="3.1.21.10" evidence="1"/>
<dbReference type="EMBL" id="AM849034">
    <property type="protein sequence ID" value="CAQ00836.1"/>
    <property type="molecule type" value="Genomic_DNA"/>
</dbReference>
<dbReference type="RefSeq" id="WP_012298145.1">
    <property type="nucleotide sequence ID" value="NZ_MZMN01000003.1"/>
</dbReference>
<dbReference type="SMR" id="B0REB8"/>
<dbReference type="STRING" id="31964.CMS0716"/>
<dbReference type="KEGG" id="cms:CMS0716"/>
<dbReference type="eggNOG" id="COG0817">
    <property type="taxonomic scope" value="Bacteria"/>
</dbReference>
<dbReference type="HOGENOM" id="CLU_091257_0_2_11"/>
<dbReference type="OrthoDB" id="9805499at2"/>
<dbReference type="Proteomes" id="UP000001318">
    <property type="component" value="Chromosome"/>
</dbReference>
<dbReference type="GO" id="GO:0005737">
    <property type="term" value="C:cytoplasm"/>
    <property type="evidence" value="ECO:0007669"/>
    <property type="project" value="UniProtKB-SubCell"/>
</dbReference>
<dbReference type="GO" id="GO:0048476">
    <property type="term" value="C:Holliday junction resolvase complex"/>
    <property type="evidence" value="ECO:0007669"/>
    <property type="project" value="UniProtKB-UniRule"/>
</dbReference>
<dbReference type="GO" id="GO:0008821">
    <property type="term" value="F:crossover junction DNA endonuclease activity"/>
    <property type="evidence" value="ECO:0007669"/>
    <property type="project" value="UniProtKB-UniRule"/>
</dbReference>
<dbReference type="GO" id="GO:0003677">
    <property type="term" value="F:DNA binding"/>
    <property type="evidence" value="ECO:0007669"/>
    <property type="project" value="UniProtKB-KW"/>
</dbReference>
<dbReference type="GO" id="GO:0000287">
    <property type="term" value="F:magnesium ion binding"/>
    <property type="evidence" value="ECO:0007669"/>
    <property type="project" value="UniProtKB-UniRule"/>
</dbReference>
<dbReference type="GO" id="GO:0006310">
    <property type="term" value="P:DNA recombination"/>
    <property type="evidence" value="ECO:0007669"/>
    <property type="project" value="UniProtKB-UniRule"/>
</dbReference>
<dbReference type="GO" id="GO:0006281">
    <property type="term" value="P:DNA repair"/>
    <property type="evidence" value="ECO:0007669"/>
    <property type="project" value="UniProtKB-UniRule"/>
</dbReference>
<dbReference type="CDD" id="cd16962">
    <property type="entry name" value="RuvC"/>
    <property type="match status" value="1"/>
</dbReference>
<dbReference type="FunFam" id="3.30.420.10:FF:000002">
    <property type="entry name" value="Crossover junction endodeoxyribonuclease RuvC"/>
    <property type="match status" value="1"/>
</dbReference>
<dbReference type="Gene3D" id="3.30.420.10">
    <property type="entry name" value="Ribonuclease H-like superfamily/Ribonuclease H"/>
    <property type="match status" value="1"/>
</dbReference>
<dbReference type="HAMAP" id="MF_00034">
    <property type="entry name" value="RuvC"/>
    <property type="match status" value="1"/>
</dbReference>
<dbReference type="InterPro" id="IPR012337">
    <property type="entry name" value="RNaseH-like_sf"/>
</dbReference>
<dbReference type="InterPro" id="IPR036397">
    <property type="entry name" value="RNaseH_sf"/>
</dbReference>
<dbReference type="InterPro" id="IPR020563">
    <property type="entry name" value="X-over_junc_endoDNase_Mg_BS"/>
</dbReference>
<dbReference type="InterPro" id="IPR002176">
    <property type="entry name" value="X-over_junc_endoDNase_RuvC"/>
</dbReference>
<dbReference type="NCBIfam" id="TIGR00228">
    <property type="entry name" value="ruvC"/>
    <property type="match status" value="1"/>
</dbReference>
<dbReference type="PANTHER" id="PTHR30194">
    <property type="entry name" value="CROSSOVER JUNCTION ENDODEOXYRIBONUCLEASE RUVC"/>
    <property type="match status" value="1"/>
</dbReference>
<dbReference type="PANTHER" id="PTHR30194:SF3">
    <property type="entry name" value="CROSSOVER JUNCTION ENDODEOXYRIBONUCLEASE RUVC"/>
    <property type="match status" value="1"/>
</dbReference>
<dbReference type="Pfam" id="PF02075">
    <property type="entry name" value="RuvC"/>
    <property type="match status" value="1"/>
</dbReference>
<dbReference type="PRINTS" id="PR00696">
    <property type="entry name" value="RSOLVASERUVC"/>
</dbReference>
<dbReference type="SUPFAM" id="SSF53098">
    <property type="entry name" value="Ribonuclease H-like"/>
    <property type="match status" value="1"/>
</dbReference>
<dbReference type="PROSITE" id="PS01321">
    <property type="entry name" value="RUVC"/>
    <property type="match status" value="1"/>
</dbReference>
<evidence type="ECO:0000255" key="1">
    <source>
        <dbReference type="HAMAP-Rule" id="MF_00034"/>
    </source>
</evidence>